<dbReference type="EMBL" id="AF539403">
    <property type="protein sequence ID" value="AAN01235.1"/>
    <property type="molecule type" value="mRNA"/>
</dbReference>
<dbReference type="RefSeq" id="NP_777014.1">
    <property type="nucleotide sequence ID" value="NM_174589.2"/>
</dbReference>
<dbReference type="SMR" id="Q8MJ08"/>
<dbReference type="FunCoup" id="Q8MJ08">
    <property type="interactions" value="466"/>
</dbReference>
<dbReference type="STRING" id="9913.ENSBTAP00000019930"/>
<dbReference type="GlyCosmos" id="Q8MJ08">
    <property type="glycosylation" value="1 site, No reported glycans"/>
</dbReference>
<dbReference type="GlyGen" id="Q8MJ08">
    <property type="glycosylation" value="1 site"/>
</dbReference>
<dbReference type="PaxDb" id="9913-ENSBTAP00000019930"/>
<dbReference type="GeneID" id="282331"/>
<dbReference type="KEGG" id="bta:282331"/>
<dbReference type="CTD" id="5734"/>
<dbReference type="eggNOG" id="KOG3656">
    <property type="taxonomic scope" value="Eukaryota"/>
</dbReference>
<dbReference type="InParanoid" id="Q8MJ08"/>
<dbReference type="OrthoDB" id="5959154at2759"/>
<dbReference type="Proteomes" id="UP000009136">
    <property type="component" value="Unplaced"/>
</dbReference>
<dbReference type="GO" id="GO:0005886">
    <property type="term" value="C:plasma membrane"/>
    <property type="evidence" value="ECO:0000318"/>
    <property type="project" value="GO_Central"/>
</dbReference>
<dbReference type="GO" id="GO:0004957">
    <property type="term" value="F:prostaglandin E receptor activity"/>
    <property type="evidence" value="ECO:0000250"/>
    <property type="project" value="UniProtKB"/>
</dbReference>
<dbReference type="GO" id="GO:0007189">
    <property type="term" value="P:adenylate cyclase-activating G protein-coupled receptor signaling pathway"/>
    <property type="evidence" value="ECO:0000318"/>
    <property type="project" value="GO_Central"/>
</dbReference>
<dbReference type="GO" id="GO:0007188">
    <property type="term" value="P:adenylate cyclase-modulating G protein-coupled receptor signaling pathway"/>
    <property type="evidence" value="ECO:0000250"/>
    <property type="project" value="UniProtKB"/>
</dbReference>
<dbReference type="GO" id="GO:0071380">
    <property type="term" value="P:cellular response to prostaglandin E stimulus"/>
    <property type="evidence" value="ECO:0000318"/>
    <property type="project" value="GO_Central"/>
</dbReference>
<dbReference type="GO" id="GO:0006954">
    <property type="term" value="P:inflammatory response"/>
    <property type="evidence" value="ECO:0000318"/>
    <property type="project" value="GO_Central"/>
</dbReference>
<dbReference type="GO" id="GO:2000420">
    <property type="term" value="P:negative regulation of eosinophil extravasation"/>
    <property type="evidence" value="ECO:0000250"/>
    <property type="project" value="UniProtKB"/>
</dbReference>
<dbReference type="GO" id="GO:0050728">
    <property type="term" value="P:negative regulation of inflammatory response"/>
    <property type="evidence" value="ECO:0000250"/>
    <property type="project" value="UniProtKB"/>
</dbReference>
<dbReference type="GO" id="GO:0033624">
    <property type="term" value="P:negative regulation of integrin activation"/>
    <property type="evidence" value="ECO:0000250"/>
    <property type="project" value="UniProtKB"/>
</dbReference>
<dbReference type="GO" id="GO:0007204">
    <property type="term" value="P:positive regulation of cytosolic calcium ion concentration"/>
    <property type="evidence" value="ECO:0000318"/>
    <property type="project" value="GO_Central"/>
</dbReference>
<dbReference type="CDD" id="cd15142">
    <property type="entry name" value="7tmA_PGE2_EP4"/>
    <property type="match status" value="1"/>
</dbReference>
<dbReference type="FunFam" id="1.20.1070.10:FF:000101">
    <property type="entry name" value="Prostaglandin E2 receptor EP4 subtype"/>
    <property type="match status" value="1"/>
</dbReference>
<dbReference type="Gene3D" id="1.20.1070.10">
    <property type="entry name" value="Rhodopsin 7-helix transmembrane proteins"/>
    <property type="match status" value="1"/>
</dbReference>
<dbReference type="InterPro" id="IPR000276">
    <property type="entry name" value="GPCR_Rhodpsn"/>
</dbReference>
<dbReference type="InterPro" id="IPR017452">
    <property type="entry name" value="GPCR_Rhodpsn_7TM"/>
</dbReference>
<dbReference type="InterPro" id="IPR001758">
    <property type="entry name" value="Prost_EP4_rcpt"/>
</dbReference>
<dbReference type="InterPro" id="IPR008365">
    <property type="entry name" value="Prostanoid_rcpt"/>
</dbReference>
<dbReference type="InterPro" id="IPR001244">
    <property type="entry name" value="Prostglndn_DP_rcpt"/>
</dbReference>
<dbReference type="PANTHER" id="PTHR11866">
    <property type="entry name" value="G-PROTEIN COUPLED RECEPTOR FAMILY 1 MEMBER"/>
    <property type="match status" value="1"/>
</dbReference>
<dbReference type="PANTHER" id="PTHR11866:SF6">
    <property type="entry name" value="PROSTAGLANDIN E2 RECEPTOR EP4 SUBTYPE"/>
    <property type="match status" value="1"/>
</dbReference>
<dbReference type="Pfam" id="PF00001">
    <property type="entry name" value="7tm_1"/>
    <property type="match status" value="1"/>
</dbReference>
<dbReference type="PRINTS" id="PR00237">
    <property type="entry name" value="GPCRRHODOPSN"/>
</dbReference>
<dbReference type="PRINTS" id="PR00428">
    <property type="entry name" value="PROSTAGLNDNR"/>
</dbReference>
<dbReference type="PRINTS" id="PR01788">
    <property type="entry name" value="PROSTANOIDR"/>
</dbReference>
<dbReference type="PRINTS" id="PR00586">
    <property type="entry name" value="PRSTNOIDEP4R"/>
</dbReference>
<dbReference type="SUPFAM" id="SSF81321">
    <property type="entry name" value="Family A G protein-coupled receptor-like"/>
    <property type="match status" value="1"/>
</dbReference>
<dbReference type="PROSITE" id="PS00237">
    <property type="entry name" value="G_PROTEIN_RECEP_F1_1"/>
    <property type="match status" value="1"/>
</dbReference>
<dbReference type="PROSITE" id="PS50262">
    <property type="entry name" value="G_PROTEIN_RECEP_F1_2"/>
    <property type="match status" value="1"/>
</dbReference>
<sequence>MSIPGTNASSSQASNPLNSPVTIPAVMFIFGVVGNLVAIVVLCKSRKEQKETTFYTLVCGLAVTDLLGTLLVSPVTIATYLKGQWPGGHALCEYSTFILLFFGLSGLSIICAMSIERYLAINHAYFYSHYVDKRLAGLTLFAVYASNVLFCALPSMGLGSSRLQYPATWCFIDWTTNVTAHAAFSYMYAGFSSFLILATVLCNVLVCGALLRMHRQFMRRTSLGTEQQHHAAAAAVALAPTACRAPPAASSPALPRLSDFRRRRSFRRIAGAEIQMVILLIATSLVVLICSIPLVVRVFVNQLYRPQLEPVIGKNPDLQAIRIASVSPILDPWIYILLRKTVLSKAIEKIKCLFCRIGGSRRERSGPHCSDSRRTSSAVSGHSRSFLSRELKEISSTSQTLLYTPELSENGLGGGRNLLPGVPGVGLTQIDSTSLRTLRISETSDSSQGQDSESFLLVDEVGGSCRAGPAPKGSSLQVTFPSETLNLSEKCI</sequence>
<reference key="1">
    <citation type="journal article" date="2003" name="Endocrinology">
        <title>Molecular cloning and characterization of bovine prostaglandin E2 receptors EP2 and EP4: expression and regulation in endometrium and myometrium during the estrous cycle and early pregnancy.</title>
        <authorList>
            <person name="Arosh J.A."/>
            <person name="Banu S.K."/>
            <person name="Chapdelaine P."/>
            <person name="Emond V."/>
            <person name="Kim J.J."/>
            <person name="MacLaren L.A."/>
            <person name="Fortier M.A."/>
        </authorList>
    </citation>
    <scope>NUCLEOTIDE SEQUENCE [MRNA]</scope>
</reference>
<accession>Q8MJ08</accession>
<protein>
    <recommendedName>
        <fullName>Prostaglandin E2 receptor EP4 subtype</fullName>
        <shortName>PGE receptor EP4 subtype</shortName>
        <shortName>PGE2 receptor EP4 subtype</shortName>
    </recommendedName>
    <alternativeName>
        <fullName>Prostanoid EP4 receptor</fullName>
    </alternativeName>
</protein>
<comment type="function">
    <text evidence="1">Receptor for prostaglandin E2 (PGE2). The activity of this receptor is mediated by G(s) proteins that stimulate adenylate cyclase. Has a relaxing effect on smooth muscle. May play an important role in regulating renal hemodynamics, intestinal epithelial transport, adrenal aldosterone secretion, and uterine function (By similarity).</text>
</comment>
<comment type="subunit">
    <text evidence="2">Interacts with FEM1A.</text>
</comment>
<comment type="subcellular location">
    <subcellularLocation>
        <location evidence="1">Cell membrane</location>
        <topology evidence="1">Multi-pass membrane protein</topology>
    </subcellularLocation>
</comment>
<comment type="PTM">
    <text evidence="1">Phosphorylation mediates agonist-mediated desensitization by promoting cytoplasmic retention.</text>
</comment>
<comment type="similarity">
    <text evidence="4">Belongs to the G-protein coupled receptor 1 family.</text>
</comment>
<proteinExistence type="evidence at transcript level"/>
<organism>
    <name type="scientific">Bos taurus</name>
    <name type="common">Bovine</name>
    <dbReference type="NCBI Taxonomy" id="9913"/>
    <lineage>
        <taxon>Eukaryota</taxon>
        <taxon>Metazoa</taxon>
        <taxon>Chordata</taxon>
        <taxon>Craniata</taxon>
        <taxon>Vertebrata</taxon>
        <taxon>Euteleostomi</taxon>
        <taxon>Mammalia</taxon>
        <taxon>Eutheria</taxon>
        <taxon>Laurasiatheria</taxon>
        <taxon>Artiodactyla</taxon>
        <taxon>Ruminantia</taxon>
        <taxon>Pecora</taxon>
        <taxon>Bovidae</taxon>
        <taxon>Bovinae</taxon>
        <taxon>Bos</taxon>
    </lineage>
</organism>
<evidence type="ECO:0000250" key="1"/>
<evidence type="ECO:0000250" key="2">
    <source>
        <dbReference type="UniProtKB" id="P35408"/>
    </source>
</evidence>
<evidence type="ECO:0000255" key="3"/>
<evidence type="ECO:0000255" key="4">
    <source>
        <dbReference type="PROSITE-ProRule" id="PRU00521"/>
    </source>
</evidence>
<evidence type="ECO:0000256" key="5">
    <source>
        <dbReference type="SAM" id="MobiDB-lite"/>
    </source>
</evidence>
<keyword id="KW-1003">Cell membrane</keyword>
<keyword id="KW-1015">Disulfide bond</keyword>
<keyword id="KW-0297">G-protein coupled receptor</keyword>
<keyword id="KW-0325">Glycoprotein</keyword>
<keyword id="KW-0472">Membrane</keyword>
<keyword id="KW-0597">Phosphoprotein</keyword>
<keyword id="KW-0675">Receptor</keyword>
<keyword id="KW-1185">Reference proteome</keyword>
<keyword id="KW-0807">Transducer</keyword>
<keyword id="KW-0812">Transmembrane</keyword>
<keyword id="KW-1133">Transmembrane helix</keyword>
<feature type="chain" id="PRO_0000289298" description="Prostaglandin E2 receptor EP4 subtype">
    <location>
        <begin position="1"/>
        <end position="492"/>
    </location>
</feature>
<feature type="topological domain" description="Extracellular" evidence="3">
    <location>
        <begin position="1"/>
        <end position="19"/>
    </location>
</feature>
<feature type="transmembrane region" description="Helical; Name=1" evidence="3">
    <location>
        <begin position="20"/>
        <end position="43"/>
    </location>
</feature>
<feature type="topological domain" description="Cytoplasmic" evidence="3">
    <location>
        <begin position="44"/>
        <end position="55"/>
    </location>
</feature>
<feature type="transmembrane region" description="Helical; Name=2" evidence="3">
    <location>
        <begin position="56"/>
        <end position="79"/>
    </location>
</feature>
<feature type="topological domain" description="Extracellular" evidence="3">
    <location>
        <begin position="80"/>
        <end position="96"/>
    </location>
</feature>
<feature type="transmembrane region" description="Helical; Name=3" evidence="3">
    <location>
        <begin position="97"/>
        <end position="115"/>
    </location>
</feature>
<feature type="topological domain" description="Cytoplasmic" evidence="3">
    <location>
        <begin position="116"/>
        <end position="135"/>
    </location>
</feature>
<feature type="transmembrane region" description="Helical; Name=4" evidence="3">
    <location>
        <begin position="136"/>
        <end position="160"/>
    </location>
</feature>
<feature type="topological domain" description="Extracellular" evidence="3">
    <location>
        <begin position="161"/>
        <end position="184"/>
    </location>
</feature>
<feature type="transmembrane region" description="Helical; Name=5" evidence="3">
    <location>
        <begin position="185"/>
        <end position="211"/>
    </location>
</feature>
<feature type="topological domain" description="Cytoplasmic" evidence="3">
    <location>
        <begin position="212"/>
        <end position="273"/>
    </location>
</feature>
<feature type="transmembrane region" description="Helical; Name=6" evidence="3">
    <location>
        <begin position="274"/>
        <end position="301"/>
    </location>
</feature>
<feature type="topological domain" description="Extracellular" evidence="3">
    <location>
        <begin position="302"/>
        <end position="318"/>
    </location>
</feature>
<feature type="transmembrane region" description="Helical; Name=7" evidence="3">
    <location>
        <begin position="319"/>
        <end position="338"/>
    </location>
</feature>
<feature type="topological domain" description="Cytoplasmic" evidence="3">
    <location>
        <begin position="339"/>
        <end position="492"/>
    </location>
</feature>
<feature type="region of interest" description="Disordered" evidence="5">
    <location>
        <begin position="361"/>
        <end position="383"/>
    </location>
</feature>
<feature type="compositionally biased region" description="Basic and acidic residues" evidence="5">
    <location>
        <begin position="361"/>
        <end position="374"/>
    </location>
</feature>
<feature type="modified residue" description="Phosphoserine" evidence="2">
    <location>
        <position position="380"/>
    </location>
</feature>
<feature type="modified residue" description="Phosphoserine" evidence="2">
    <location>
        <position position="383"/>
    </location>
</feature>
<feature type="modified residue" description="Phosphoserine" evidence="2">
    <location>
        <position position="385"/>
    </location>
</feature>
<feature type="modified residue" description="Phosphoserine" evidence="2">
    <location>
        <position position="388"/>
    </location>
</feature>
<feature type="glycosylation site" description="N-linked (GlcNAc...) asparagine" evidence="3">
    <location>
        <position position="7"/>
    </location>
</feature>
<feature type="disulfide bond" evidence="4">
    <location>
        <begin position="92"/>
        <end position="170"/>
    </location>
</feature>
<gene>
    <name type="primary">PTGER4</name>
</gene>
<name>PE2R4_BOVIN</name>